<keyword id="KW-1185">Reference proteome</keyword>
<keyword id="KW-0677">Repeat</keyword>
<reference key="1">
    <citation type="journal article" date="1999" name="Nature">
        <title>Sequence and analysis of chromosome 2 of the plant Arabidopsis thaliana.</title>
        <authorList>
            <person name="Lin X."/>
            <person name="Kaul S."/>
            <person name="Rounsley S.D."/>
            <person name="Shea T.P."/>
            <person name="Benito M.-I."/>
            <person name="Town C.D."/>
            <person name="Fujii C.Y."/>
            <person name="Mason T.M."/>
            <person name="Bowman C.L."/>
            <person name="Barnstead M.E."/>
            <person name="Feldblyum T.V."/>
            <person name="Buell C.R."/>
            <person name="Ketchum K.A."/>
            <person name="Lee J.J."/>
            <person name="Ronning C.M."/>
            <person name="Koo H.L."/>
            <person name="Moffat K.S."/>
            <person name="Cronin L.A."/>
            <person name="Shen M."/>
            <person name="Pai G."/>
            <person name="Van Aken S."/>
            <person name="Umayam L."/>
            <person name="Tallon L.J."/>
            <person name="Gill J.E."/>
            <person name="Adams M.D."/>
            <person name="Carrera A.J."/>
            <person name="Creasy T.H."/>
            <person name="Goodman H.M."/>
            <person name="Somerville C.R."/>
            <person name="Copenhaver G.P."/>
            <person name="Preuss D."/>
            <person name="Nierman W.C."/>
            <person name="White O."/>
            <person name="Eisen J.A."/>
            <person name="Salzberg S.L."/>
            <person name="Fraser C.M."/>
            <person name="Venter J.C."/>
        </authorList>
    </citation>
    <scope>NUCLEOTIDE SEQUENCE [LARGE SCALE GENOMIC DNA]</scope>
    <source>
        <strain>cv. Columbia</strain>
    </source>
</reference>
<reference key="2">
    <citation type="journal article" date="2017" name="Plant J.">
        <title>Araport11: a complete reannotation of the Arabidopsis thaliana reference genome.</title>
        <authorList>
            <person name="Cheng C.Y."/>
            <person name="Krishnakumar V."/>
            <person name="Chan A.P."/>
            <person name="Thibaud-Nissen F."/>
            <person name="Schobel S."/>
            <person name="Town C.D."/>
        </authorList>
    </citation>
    <scope>GENOME REANNOTATION</scope>
    <source>
        <strain>cv. Columbia</strain>
    </source>
</reference>
<reference key="3">
    <citation type="submission" date="2004-11" db="EMBL/GenBank/DDBJ databases">
        <title>Arabidopsis ORF clones.</title>
        <authorList>
            <person name="Shinn P."/>
            <person name="Chen H."/>
            <person name="Cheuk R.F."/>
            <person name="Kim C.J."/>
            <person name="Ecker J.R."/>
        </authorList>
    </citation>
    <scope>NUCLEOTIDE SEQUENCE [LARGE SCALE MRNA]</scope>
    <source>
        <strain>cv. Columbia</strain>
    </source>
</reference>
<reference key="4">
    <citation type="submission" date="2006-07" db="EMBL/GenBank/DDBJ databases">
        <title>Large-scale analysis of RIKEN Arabidopsis full-length (RAFL) cDNAs.</title>
        <authorList>
            <person name="Totoki Y."/>
            <person name="Seki M."/>
            <person name="Ishida J."/>
            <person name="Nakajima M."/>
            <person name="Enju A."/>
            <person name="Kamiya A."/>
            <person name="Narusaka M."/>
            <person name="Shin-i T."/>
            <person name="Nakagawa M."/>
            <person name="Sakamoto N."/>
            <person name="Oishi K."/>
            <person name="Kohara Y."/>
            <person name="Kobayashi M."/>
            <person name="Toyoda A."/>
            <person name="Sakaki Y."/>
            <person name="Sakurai T."/>
            <person name="Iida K."/>
            <person name="Akiyama K."/>
            <person name="Satou M."/>
            <person name="Toyoda T."/>
            <person name="Konagaya A."/>
            <person name="Carninci P."/>
            <person name="Kawai J."/>
            <person name="Hayashizaki Y."/>
            <person name="Shinozaki K."/>
        </authorList>
    </citation>
    <scope>NUCLEOTIDE SEQUENCE [LARGE SCALE MRNA]</scope>
    <source>
        <strain>cv. Columbia</strain>
    </source>
</reference>
<reference key="5">
    <citation type="journal article" date="2004" name="Plant Cell">
        <title>Genome-wide analysis of Arabidopsis pentatricopeptide repeat proteins reveals their essential role in organelle biogenesis.</title>
        <authorList>
            <person name="Lurin C."/>
            <person name="Andres C."/>
            <person name="Aubourg S."/>
            <person name="Bellaoui M."/>
            <person name="Bitton F."/>
            <person name="Bruyere C."/>
            <person name="Caboche M."/>
            <person name="Debast C."/>
            <person name="Gualberto J."/>
            <person name="Hoffmann B."/>
            <person name="Lecharny A."/>
            <person name="Le Ret M."/>
            <person name="Martin-Magniette M.-L."/>
            <person name="Mireau H."/>
            <person name="Peeters N."/>
            <person name="Renou J.-P."/>
            <person name="Szurek B."/>
            <person name="Taconnat L."/>
            <person name="Small I."/>
        </authorList>
    </citation>
    <scope>GENE FAMILY</scope>
</reference>
<evidence type="ECO:0000256" key="1">
    <source>
        <dbReference type="SAM" id="MobiDB-lite"/>
    </source>
</evidence>
<evidence type="ECO:0000305" key="2"/>
<organism>
    <name type="scientific">Arabidopsis thaliana</name>
    <name type="common">Mouse-ear cress</name>
    <dbReference type="NCBI Taxonomy" id="3702"/>
    <lineage>
        <taxon>Eukaryota</taxon>
        <taxon>Viridiplantae</taxon>
        <taxon>Streptophyta</taxon>
        <taxon>Embryophyta</taxon>
        <taxon>Tracheophyta</taxon>
        <taxon>Spermatophyta</taxon>
        <taxon>Magnoliopsida</taxon>
        <taxon>eudicotyledons</taxon>
        <taxon>Gunneridae</taxon>
        <taxon>Pentapetalae</taxon>
        <taxon>rosids</taxon>
        <taxon>malvids</taxon>
        <taxon>Brassicales</taxon>
        <taxon>Brassicaceae</taxon>
        <taxon>Camelineae</taxon>
        <taxon>Arabidopsis</taxon>
    </lineage>
</organism>
<protein>
    <recommendedName>
        <fullName>Pentatricopeptide repeat-containing protein At2g01860</fullName>
    </recommendedName>
    <alternativeName>
        <fullName>Protein EMBRYO DEFECTIVE 975</fullName>
    </alternativeName>
</protein>
<feature type="chain" id="PRO_0000356002" description="Pentatricopeptide repeat-containing protein At2g01860">
    <location>
        <begin position="1"/>
        <end position="486"/>
    </location>
</feature>
<feature type="repeat" description="PPR 1">
    <location>
        <begin position="290"/>
        <end position="321"/>
    </location>
</feature>
<feature type="repeat" description="PPR 2">
    <location>
        <begin position="327"/>
        <end position="361"/>
    </location>
</feature>
<feature type="repeat" description="PPR 3">
    <location>
        <begin position="362"/>
        <end position="396"/>
    </location>
</feature>
<feature type="repeat" description="PPR 4">
    <location>
        <begin position="397"/>
        <end position="431"/>
    </location>
</feature>
<feature type="repeat" description="PPR 5">
    <location>
        <begin position="432"/>
        <end position="466"/>
    </location>
</feature>
<feature type="region of interest" description="Disordered" evidence="1">
    <location>
        <begin position="111"/>
        <end position="137"/>
    </location>
</feature>
<comment type="similarity">
    <text evidence="2">Belongs to the PPR family. P subfamily.</text>
</comment>
<comment type="sequence caution" evidence="2">
    <conflict type="erroneous initiation">
        <sequence resource="EMBL-CDS" id="AAD21784"/>
    </conflict>
</comment>
<comment type="online information" name="Pentatricopeptide repeat proteins">
    <link uri="https://ppr.plantenergy.uwa.edu.au"/>
</comment>
<dbReference type="EMBL" id="AC007069">
    <property type="protein sequence ID" value="AAD21784.1"/>
    <property type="status" value="ALT_INIT"/>
    <property type="molecule type" value="Genomic_DNA"/>
</dbReference>
<dbReference type="EMBL" id="CP002685">
    <property type="protein sequence ID" value="AEC05509.1"/>
    <property type="molecule type" value="Genomic_DNA"/>
</dbReference>
<dbReference type="EMBL" id="BT015882">
    <property type="protein sequence ID" value="AAU95418.1"/>
    <property type="molecule type" value="mRNA"/>
</dbReference>
<dbReference type="EMBL" id="BT020200">
    <property type="protein sequence ID" value="AAV59266.1"/>
    <property type="molecule type" value="mRNA"/>
</dbReference>
<dbReference type="EMBL" id="AK229094">
    <property type="protein sequence ID" value="BAF00974.1"/>
    <property type="molecule type" value="mRNA"/>
</dbReference>
<dbReference type="PIR" id="A84430">
    <property type="entry name" value="A84430"/>
</dbReference>
<dbReference type="RefSeq" id="NP_178295.2">
    <property type="nucleotide sequence ID" value="NM_126247.3"/>
</dbReference>
<dbReference type="SMR" id="Q5XET4"/>
<dbReference type="BioGRID" id="120">
    <property type="interactions" value="1"/>
</dbReference>
<dbReference type="FunCoup" id="Q5XET4">
    <property type="interactions" value="397"/>
</dbReference>
<dbReference type="STRING" id="3702.Q5XET4"/>
<dbReference type="PaxDb" id="3702-AT2G01860.1"/>
<dbReference type="ProteomicsDB" id="250491"/>
<dbReference type="DNASU" id="814717"/>
<dbReference type="EnsemblPlants" id="AT2G01860.1">
    <property type="protein sequence ID" value="AT2G01860.1"/>
    <property type="gene ID" value="AT2G01860"/>
</dbReference>
<dbReference type="GeneID" id="814717"/>
<dbReference type="Gramene" id="AT2G01860.1">
    <property type="protein sequence ID" value="AT2G01860.1"/>
    <property type="gene ID" value="AT2G01860"/>
</dbReference>
<dbReference type="KEGG" id="ath:AT2G01860"/>
<dbReference type="Araport" id="AT2G01860"/>
<dbReference type="TAIR" id="AT2G01860">
    <property type="gene designation" value="EMB975"/>
</dbReference>
<dbReference type="eggNOG" id="KOG4197">
    <property type="taxonomic scope" value="Eukaryota"/>
</dbReference>
<dbReference type="HOGENOM" id="CLU_032605_0_0_1"/>
<dbReference type="InParanoid" id="Q5XET4"/>
<dbReference type="OMA" id="EMGVEHS"/>
<dbReference type="PhylomeDB" id="Q5XET4"/>
<dbReference type="PRO" id="PR:Q5XET4"/>
<dbReference type="Proteomes" id="UP000006548">
    <property type="component" value="Chromosome 2"/>
</dbReference>
<dbReference type="ExpressionAtlas" id="Q5XET4">
    <property type="expression patterns" value="baseline and differential"/>
</dbReference>
<dbReference type="Gene3D" id="1.25.40.10">
    <property type="entry name" value="Tetratricopeptide repeat domain"/>
    <property type="match status" value="2"/>
</dbReference>
<dbReference type="InterPro" id="IPR002885">
    <property type="entry name" value="Pentatricopeptide_rpt"/>
</dbReference>
<dbReference type="InterPro" id="IPR033443">
    <property type="entry name" value="PROP1-like_PPR_dom"/>
</dbReference>
<dbReference type="InterPro" id="IPR011990">
    <property type="entry name" value="TPR-like_helical_dom_sf"/>
</dbReference>
<dbReference type="PANTHER" id="PTHR47930:SF2">
    <property type="entry name" value="PENTATRICOPEPTIDE REPEAT PROTEIN (AFU_ORTHOLOGUE AFUA_8G04250)"/>
    <property type="match status" value="1"/>
</dbReference>
<dbReference type="PANTHER" id="PTHR47930">
    <property type="entry name" value="YALI0C12947P"/>
    <property type="match status" value="1"/>
</dbReference>
<dbReference type="Pfam" id="PF17177">
    <property type="entry name" value="PPR_long"/>
    <property type="match status" value="1"/>
</dbReference>
<dbReference type="PROSITE" id="PS51375">
    <property type="entry name" value="PPR"/>
    <property type="match status" value="5"/>
</dbReference>
<accession>Q5XET4</accession>
<accession>Q9SIS8</accession>
<sequence length="486" mass="55650">MILHCPVSLSLSFHLNLRTSRIGNIGVTRVNASQRNHSKKLTKNLRNPRRTKLPPDFGVNLFLRKPKIEPLVIDDDDEQVQESVNDDDDAVVWEPEEIEAISSLFQKRIPQKPDKPSRVRPLPLPQPHKLRPLGLPTPKKNIIRSPALSSVSKQVYKDPSFLIGLAREIKSLPSSDADVSLVLNKWVSFLRKGSLSTTIRELGHMGLPERALQTYHWAEKHSHLVPDNRILASTIQVLAKHHELKLLKFDNSLASKNVIEAMIKGCIEGGWLNLARKLILISKSNNRILDSSVYVKMILEIAKNPDKYHLVVALLEELKKREDLKLSQQDCTSIMKICVKLGEFELVESLFDWFKASNREPSVVMYTTMIHSRYSEQKYREAMSVVWEMEESNCLLDLPAYRVVIKLFVALDDLGRAMRYYSKLKEAGFSPTYDIYRDMISVYTASGRLTKCKEICKEVEDAGLRLDKDTSFRLLQLEKQTMSLLH</sequence>
<name>PP142_ARATH</name>
<proteinExistence type="evidence at transcript level"/>
<gene>
    <name type="primary">EMB975</name>
    <name type="ordered locus">At2g01860</name>
    <name type="ORF">T23K3.5</name>
</gene>